<protein>
    <recommendedName>
        <fullName evidence="1">Glycine--tRNA ligase</fullName>
        <ecNumber evidence="1">6.1.1.14</ecNumber>
    </recommendedName>
    <alternativeName>
        <fullName evidence="1">Glycyl-tRNA synthetase</fullName>
        <shortName evidence="1">GlyRS</shortName>
    </alternativeName>
</protein>
<keyword id="KW-0030">Aminoacyl-tRNA synthetase</keyword>
<keyword id="KW-0067">ATP-binding</keyword>
<keyword id="KW-0963">Cytoplasm</keyword>
<keyword id="KW-0436">Ligase</keyword>
<keyword id="KW-0547">Nucleotide-binding</keyword>
<keyword id="KW-0648">Protein biosynthesis</keyword>
<keyword id="KW-1185">Reference proteome</keyword>
<gene>
    <name evidence="1" type="primary">glyQS</name>
    <name type="synonym">glyS</name>
    <name type="ordered locus">MSC_0464</name>
</gene>
<dbReference type="EC" id="6.1.1.14" evidence="1"/>
<dbReference type="EMBL" id="BX293980">
    <property type="protein sequence ID" value="CAE77092.1"/>
    <property type="molecule type" value="Genomic_DNA"/>
</dbReference>
<dbReference type="RefSeq" id="NP_975450.1">
    <property type="nucleotide sequence ID" value="NC_005364.2"/>
</dbReference>
<dbReference type="RefSeq" id="WP_011166648.1">
    <property type="nucleotide sequence ID" value="NC_005364.2"/>
</dbReference>
<dbReference type="SMR" id="Q6MTE4"/>
<dbReference type="STRING" id="272632.MSC_0464"/>
<dbReference type="KEGG" id="mmy:MSC_0464"/>
<dbReference type="PATRIC" id="fig|272632.4.peg.504"/>
<dbReference type="eggNOG" id="COG0423">
    <property type="taxonomic scope" value="Bacteria"/>
</dbReference>
<dbReference type="HOGENOM" id="CLU_015515_2_0_14"/>
<dbReference type="Proteomes" id="UP000001016">
    <property type="component" value="Chromosome"/>
</dbReference>
<dbReference type="GO" id="GO:0005737">
    <property type="term" value="C:cytoplasm"/>
    <property type="evidence" value="ECO:0007669"/>
    <property type="project" value="UniProtKB-SubCell"/>
</dbReference>
<dbReference type="GO" id="GO:0005524">
    <property type="term" value="F:ATP binding"/>
    <property type="evidence" value="ECO:0007669"/>
    <property type="project" value="UniProtKB-UniRule"/>
</dbReference>
<dbReference type="GO" id="GO:0004820">
    <property type="term" value="F:glycine-tRNA ligase activity"/>
    <property type="evidence" value="ECO:0000250"/>
    <property type="project" value="UniProtKB"/>
</dbReference>
<dbReference type="GO" id="GO:0046983">
    <property type="term" value="F:protein dimerization activity"/>
    <property type="evidence" value="ECO:0000250"/>
    <property type="project" value="UniProtKB"/>
</dbReference>
<dbReference type="GO" id="GO:0006426">
    <property type="term" value="P:glycyl-tRNA aminoacylation"/>
    <property type="evidence" value="ECO:0007669"/>
    <property type="project" value="UniProtKB-UniRule"/>
</dbReference>
<dbReference type="CDD" id="cd00774">
    <property type="entry name" value="GlyRS-like_core"/>
    <property type="match status" value="1"/>
</dbReference>
<dbReference type="FunFam" id="3.40.50.800:FF:000002">
    <property type="entry name" value="Glycine--tRNA ligase"/>
    <property type="match status" value="1"/>
</dbReference>
<dbReference type="Gene3D" id="3.40.50.800">
    <property type="entry name" value="Anticodon-binding domain"/>
    <property type="match status" value="1"/>
</dbReference>
<dbReference type="Gene3D" id="3.30.930.10">
    <property type="entry name" value="Bira Bifunctional Protein, Domain 2"/>
    <property type="match status" value="1"/>
</dbReference>
<dbReference type="HAMAP" id="MF_00253_B">
    <property type="entry name" value="Gly_tRNA_synth_B"/>
    <property type="match status" value="1"/>
</dbReference>
<dbReference type="InterPro" id="IPR002314">
    <property type="entry name" value="aa-tRNA-synt_IIb"/>
</dbReference>
<dbReference type="InterPro" id="IPR006195">
    <property type="entry name" value="aa-tRNA-synth_II"/>
</dbReference>
<dbReference type="InterPro" id="IPR045864">
    <property type="entry name" value="aa-tRNA-synth_II/BPL/LPL"/>
</dbReference>
<dbReference type="InterPro" id="IPR004154">
    <property type="entry name" value="Anticodon-bd"/>
</dbReference>
<dbReference type="InterPro" id="IPR036621">
    <property type="entry name" value="Anticodon-bd_dom_sf"/>
</dbReference>
<dbReference type="InterPro" id="IPR027031">
    <property type="entry name" value="Gly-tRNA_synthase/POLG2"/>
</dbReference>
<dbReference type="InterPro" id="IPR022961">
    <property type="entry name" value="Gly_tRNA_ligase_bac"/>
</dbReference>
<dbReference type="InterPro" id="IPR033731">
    <property type="entry name" value="GlyRS-like_core"/>
</dbReference>
<dbReference type="InterPro" id="IPR002315">
    <property type="entry name" value="tRNA-synt_gly"/>
</dbReference>
<dbReference type="NCBIfam" id="TIGR00389">
    <property type="entry name" value="glyS_dimeric"/>
    <property type="match status" value="1"/>
</dbReference>
<dbReference type="NCBIfam" id="NF003211">
    <property type="entry name" value="PRK04173.1"/>
    <property type="match status" value="1"/>
</dbReference>
<dbReference type="PANTHER" id="PTHR10745:SF8">
    <property type="entry name" value="DNA POLYMERASE SUBUNIT GAMMA-2, MITOCHONDRIAL"/>
    <property type="match status" value="1"/>
</dbReference>
<dbReference type="PANTHER" id="PTHR10745">
    <property type="entry name" value="GLYCYL-TRNA SYNTHETASE/DNA POLYMERASE SUBUNIT GAMMA-2"/>
    <property type="match status" value="1"/>
</dbReference>
<dbReference type="Pfam" id="PF03129">
    <property type="entry name" value="HGTP_anticodon"/>
    <property type="match status" value="1"/>
</dbReference>
<dbReference type="Pfam" id="PF00587">
    <property type="entry name" value="tRNA-synt_2b"/>
    <property type="match status" value="1"/>
</dbReference>
<dbReference type="PRINTS" id="PR01043">
    <property type="entry name" value="TRNASYNTHGLY"/>
</dbReference>
<dbReference type="SUPFAM" id="SSF52954">
    <property type="entry name" value="Class II aaRS ABD-related"/>
    <property type="match status" value="1"/>
</dbReference>
<dbReference type="SUPFAM" id="SSF55681">
    <property type="entry name" value="Class II aaRS and biotin synthetases"/>
    <property type="match status" value="1"/>
</dbReference>
<dbReference type="PROSITE" id="PS50862">
    <property type="entry name" value="AA_TRNA_LIGASE_II"/>
    <property type="match status" value="1"/>
</dbReference>
<name>SYG_MYCMS</name>
<proteinExistence type="inferred from homology"/>
<evidence type="ECO:0000255" key="1">
    <source>
        <dbReference type="HAMAP-Rule" id="MF_00253"/>
    </source>
</evidence>
<comment type="function">
    <text evidence="1">Catalyzes the attachment of glycine to tRNA(Gly).</text>
</comment>
<comment type="catalytic activity">
    <reaction evidence="1">
        <text>tRNA(Gly) + glycine + ATP = glycyl-tRNA(Gly) + AMP + diphosphate</text>
        <dbReference type="Rhea" id="RHEA:16013"/>
        <dbReference type="Rhea" id="RHEA-COMP:9664"/>
        <dbReference type="Rhea" id="RHEA-COMP:9683"/>
        <dbReference type="ChEBI" id="CHEBI:30616"/>
        <dbReference type="ChEBI" id="CHEBI:33019"/>
        <dbReference type="ChEBI" id="CHEBI:57305"/>
        <dbReference type="ChEBI" id="CHEBI:78442"/>
        <dbReference type="ChEBI" id="CHEBI:78522"/>
        <dbReference type="ChEBI" id="CHEBI:456215"/>
        <dbReference type="EC" id="6.1.1.14"/>
    </reaction>
</comment>
<comment type="subunit">
    <text evidence="1">Homodimer.</text>
</comment>
<comment type="subcellular location">
    <subcellularLocation>
        <location evidence="1">Cytoplasm</location>
    </subcellularLocation>
</comment>
<comment type="similarity">
    <text evidence="1">Belongs to the class-II aminoacyl-tRNA synthetase family.</text>
</comment>
<sequence>MSKSIEKMISHLKNQGFVFQGSEIYGGLANSWDYGPLGCEVKNKLKKVWWDFFVKKNPLNVGLDSSIILNSKVWKASGHIDGFNDPLIDCKNCKSRWRADKLIEEFDSSINTGIMTSAQLEDYINQNNILCKKCQKKDFTQIRQFALMFKTNQGVLEDDSSIVYLRPETAQGIFINFKNVQRSMRKKLPFGIGQIGKSFRNEITPGNFIFRTREFEQMELEFFFDPSDQKDWFKYWLDQIELFLTKKICLDKSNYKIRENLKDELSHYALKTSDIEFNFPFGWGELWGISHRSDFDLKVHQNLSKEDLTVLKEENNQKVLANVIEPSVGVERLMLAIFWQAYTEEQLEENNSRTVLKLPYNLAPYQVAITPLSKQLNQNAHQLFLELLKDFDAVYDETGNIGKRYRRQDAIGTPFVITYDFQTLEDQKVTIRYRDTMKQERILISQLKDFLNSQFN</sequence>
<feature type="chain" id="PRO_0000072965" description="Glycine--tRNA ligase">
    <location>
        <begin position="1"/>
        <end position="456"/>
    </location>
</feature>
<feature type="binding site" evidence="1">
    <location>
        <position position="98"/>
    </location>
    <ligand>
        <name>substrate</name>
    </ligand>
</feature>
<feature type="binding site" evidence="1">
    <location>
        <position position="168"/>
    </location>
    <ligand>
        <name>substrate</name>
    </ligand>
</feature>
<feature type="binding site" evidence="1">
    <location>
        <begin position="200"/>
        <end position="202"/>
    </location>
    <ligand>
        <name>ATP</name>
        <dbReference type="ChEBI" id="CHEBI:30616"/>
    </ligand>
</feature>
<feature type="binding site" evidence="1">
    <location>
        <begin position="210"/>
        <end position="215"/>
    </location>
    <ligand>
        <name>ATP</name>
        <dbReference type="ChEBI" id="CHEBI:30616"/>
    </ligand>
</feature>
<feature type="binding site" evidence="1">
    <location>
        <begin position="215"/>
        <end position="219"/>
    </location>
    <ligand>
        <name>substrate</name>
    </ligand>
</feature>
<feature type="binding site" evidence="1">
    <location>
        <begin position="285"/>
        <end position="286"/>
    </location>
    <ligand>
        <name>ATP</name>
        <dbReference type="ChEBI" id="CHEBI:30616"/>
    </ligand>
</feature>
<feature type="binding site" evidence="1">
    <location>
        <begin position="325"/>
        <end position="329"/>
    </location>
    <ligand>
        <name>substrate</name>
    </ligand>
</feature>
<feature type="binding site" evidence="1">
    <location>
        <begin position="329"/>
        <end position="332"/>
    </location>
    <ligand>
        <name>ATP</name>
        <dbReference type="ChEBI" id="CHEBI:30616"/>
    </ligand>
</feature>
<reference key="1">
    <citation type="journal article" date="2004" name="Genome Res.">
        <title>The genome sequence of Mycoplasma mycoides subsp. mycoides SC type strain PG1T, the causative agent of contagious bovine pleuropneumonia (CBPP).</title>
        <authorList>
            <person name="Westberg J."/>
            <person name="Persson A."/>
            <person name="Holmberg A."/>
            <person name="Goesmann A."/>
            <person name="Lundeberg J."/>
            <person name="Johansson K.-E."/>
            <person name="Pettersson B."/>
            <person name="Uhlen M."/>
        </authorList>
    </citation>
    <scope>NUCLEOTIDE SEQUENCE [LARGE SCALE GENOMIC DNA]</scope>
    <source>
        <strain>CCUG 32753 / NCTC 10114 / PG1</strain>
    </source>
</reference>
<organism>
    <name type="scientific">Mycoplasma mycoides subsp. mycoides SC (strain CCUG 32753 / NCTC 10114 / PG1)</name>
    <dbReference type="NCBI Taxonomy" id="272632"/>
    <lineage>
        <taxon>Bacteria</taxon>
        <taxon>Bacillati</taxon>
        <taxon>Mycoplasmatota</taxon>
        <taxon>Mollicutes</taxon>
        <taxon>Mycoplasmataceae</taxon>
        <taxon>Mycoplasma</taxon>
    </lineage>
</organism>
<accession>Q6MTE4</accession>